<evidence type="ECO:0000255" key="1">
    <source>
        <dbReference type="HAMAP-Rule" id="MF_01605"/>
    </source>
</evidence>
<sequence length="331" mass="36283">MKQTVYTASPESQQIHVWSLNHEGTLTLVQVVDVPGQVQTMVVSPDKRYLYVGVRPEFRVLAYRIAPDDGALTFAAESALPGSPTHISTDHHGRFVFVGSYNAGNVSVTRLQDGLPVELVGVVEGLDGCHSANITPDNRTLWVPALKQDRICLFTLSDDGHLVAQEPAEVNTVEGAGPRHMVFHPNRQYAYCVNELNSSVDVWQLKNPHGEIECVQTLDMMPADFSDTRWAADIHITPDGRHLYACDRTASLITVFSVSEDGSVLSVEGFQPTEAQPRGFNIDNSGKYLIAAGQKSHHIAVYEITGTQGLLTEKGRYAVGQGPMWVVVNAY</sequence>
<accession>B5R752</accession>
<gene>
    <name evidence="1" type="primary">pgl</name>
    <name type="ordered locus">SG0763</name>
</gene>
<reference key="1">
    <citation type="journal article" date="2008" name="Genome Res.">
        <title>Comparative genome analysis of Salmonella enteritidis PT4 and Salmonella gallinarum 287/91 provides insights into evolutionary and host adaptation pathways.</title>
        <authorList>
            <person name="Thomson N.R."/>
            <person name="Clayton D.J."/>
            <person name="Windhorst D."/>
            <person name="Vernikos G."/>
            <person name="Davidson S."/>
            <person name="Churcher C."/>
            <person name="Quail M.A."/>
            <person name="Stevens M."/>
            <person name="Jones M.A."/>
            <person name="Watson M."/>
            <person name="Barron A."/>
            <person name="Layton A."/>
            <person name="Pickard D."/>
            <person name="Kingsley R.A."/>
            <person name="Bignell A."/>
            <person name="Clark L."/>
            <person name="Harris B."/>
            <person name="Ormond D."/>
            <person name="Abdellah Z."/>
            <person name="Brooks K."/>
            <person name="Cherevach I."/>
            <person name="Chillingworth T."/>
            <person name="Woodward J."/>
            <person name="Norberczak H."/>
            <person name="Lord A."/>
            <person name="Arrowsmith C."/>
            <person name="Jagels K."/>
            <person name="Moule S."/>
            <person name="Mungall K."/>
            <person name="Saunders M."/>
            <person name="Whitehead S."/>
            <person name="Chabalgoity J.A."/>
            <person name="Maskell D."/>
            <person name="Humphreys T."/>
            <person name="Roberts M."/>
            <person name="Barrow P.A."/>
            <person name="Dougan G."/>
            <person name="Parkhill J."/>
        </authorList>
    </citation>
    <scope>NUCLEOTIDE SEQUENCE [LARGE SCALE GENOMIC DNA]</scope>
    <source>
        <strain>287/91 / NCTC 13346</strain>
    </source>
</reference>
<feature type="chain" id="PRO_1000148164" description="6-phosphogluconolactonase">
    <location>
        <begin position="1"/>
        <end position="331"/>
    </location>
</feature>
<organism>
    <name type="scientific">Salmonella gallinarum (strain 287/91 / NCTC 13346)</name>
    <dbReference type="NCBI Taxonomy" id="550538"/>
    <lineage>
        <taxon>Bacteria</taxon>
        <taxon>Pseudomonadati</taxon>
        <taxon>Pseudomonadota</taxon>
        <taxon>Gammaproteobacteria</taxon>
        <taxon>Enterobacterales</taxon>
        <taxon>Enterobacteriaceae</taxon>
        <taxon>Salmonella</taxon>
    </lineage>
</organism>
<name>6PGL_SALG2</name>
<dbReference type="EC" id="3.1.1.31" evidence="1"/>
<dbReference type="EMBL" id="AM933173">
    <property type="protein sequence ID" value="CAR36659.1"/>
    <property type="molecule type" value="Genomic_DNA"/>
</dbReference>
<dbReference type="RefSeq" id="WP_000815476.1">
    <property type="nucleotide sequence ID" value="NC_011274.1"/>
</dbReference>
<dbReference type="SMR" id="B5R752"/>
<dbReference type="KEGG" id="seg:SG0763"/>
<dbReference type="HOGENOM" id="CLU_038716_2_0_6"/>
<dbReference type="UniPathway" id="UPA00115">
    <property type="reaction ID" value="UER00409"/>
</dbReference>
<dbReference type="Proteomes" id="UP000008321">
    <property type="component" value="Chromosome"/>
</dbReference>
<dbReference type="GO" id="GO:0005829">
    <property type="term" value="C:cytosol"/>
    <property type="evidence" value="ECO:0007669"/>
    <property type="project" value="TreeGrafter"/>
</dbReference>
<dbReference type="GO" id="GO:0017057">
    <property type="term" value="F:6-phosphogluconolactonase activity"/>
    <property type="evidence" value="ECO:0007669"/>
    <property type="project" value="UniProtKB-UniRule"/>
</dbReference>
<dbReference type="GO" id="GO:0006006">
    <property type="term" value="P:glucose metabolic process"/>
    <property type="evidence" value="ECO:0007669"/>
    <property type="project" value="UniProtKB-KW"/>
</dbReference>
<dbReference type="GO" id="GO:0009051">
    <property type="term" value="P:pentose-phosphate shunt, oxidative branch"/>
    <property type="evidence" value="ECO:0007669"/>
    <property type="project" value="UniProtKB-UniRule"/>
</dbReference>
<dbReference type="FunFam" id="2.130.10.10:FF:000051">
    <property type="entry name" value="6-phosphogluconolactonase"/>
    <property type="match status" value="1"/>
</dbReference>
<dbReference type="Gene3D" id="2.130.10.10">
    <property type="entry name" value="YVTN repeat-like/Quinoprotein amine dehydrogenase"/>
    <property type="match status" value="1"/>
</dbReference>
<dbReference type="HAMAP" id="MF_01605">
    <property type="entry name" value="6P_gluconolactonase"/>
    <property type="match status" value="1"/>
</dbReference>
<dbReference type="InterPro" id="IPR022528">
    <property type="entry name" value="6-phosphogluconolactonase_YbhE"/>
</dbReference>
<dbReference type="InterPro" id="IPR050282">
    <property type="entry name" value="Cycloisomerase_2"/>
</dbReference>
<dbReference type="InterPro" id="IPR019405">
    <property type="entry name" value="Lactonase_7-beta_prop"/>
</dbReference>
<dbReference type="InterPro" id="IPR011045">
    <property type="entry name" value="N2O_reductase_N"/>
</dbReference>
<dbReference type="InterPro" id="IPR015943">
    <property type="entry name" value="WD40/YVTN_repeat-like_dom_sf"/>
</dbReference>
<dbReference type="NCBIfam" id="NF008258">
    <property type="entry name" value="PRK11028.1"/>
    <property type="match status" value="1"/>
</dbReference>
<dbReference type="PANTHER" id="PTHR30344:SF1">
    <property type="entry name" value="6-PHOSPHOGLUCONOLACTONASE"/>
    <property type="match status" value="1"/>
</dbReference>
<dbReference type="PANTHER" id="PTHR30344">
    <property type="entry name" value="6-PHOSPHOGLUCONOLACTONASE-RELATED"/>
    <property type="match status" value="1"/>
</dbReference>
<dbReference type="Pfam" id="PF10282">
    <property type="entry name" value="Lactonase"/>
    <property type="match status" value="1"/>
</dbReference>
<dbReference type="SUPFAM" id="SSF50974">
    <property type="entry name" value="Nitrous oxide reductase, N-terminal domain"/>
    <property type="match status" value="2"/>
</dbReference>
<proteinExistence type="inferred from homology"/>
<comment type="function">
    <text evidence="1">Catalyzes the hydrolysis of 6-phosphogluconolactone to 6-phosphogluconate.</text>
</comment>
<comment type="catalytic activity">
    <reaction evidence="1">
        <text>6-phospho-D-glucono-1,5-lactone + H2O = 6-phospho-D-gluconate + H(+)</text>
        <dbReference type="Rhea" id="RHEA:12556"/>
        <dbReference type="ChEBI" id="CHEBI:15377"/>
        <dbReference type="ChEBI" id="CHEBI:15378"/>
        <dbReference type="ChEBI" id="CHEBI:57955"/>
        <dbReference type="ChEBI" id="CHEBI:58759"/>
        <dbReference type="EC" id="3.1.1.31"/>
    </reaction>
</comment>
<comment type="pathway">
    <text evidence="1">Carbohydrate degradation; pentose phosphate pathway; D-ribulose 5-phosphate from D-glucose 6-phosphate (oxidative stage): step 2/3.</text>
</comment>
<comment type="similarity">
    <text evidence="1">Belongs to the cycloisomerase 2 family.</text>
</comment>
<protein>
    <recommendedName>
        <fullName evidence="1">6-phosphogluconolactonase</fullName>
        <shortName evidence="1">6-P-gluconolactonase</shortName>
        <ecNumber evidence="1">3.1.1.31</ecNumber>
    </recommendedName>
</protein>
<keyword id="KW-0119">Carbohydrate metabolism</keyword>
<keyword id="KW-0313">Glucose metabolism</keyword>
<keyword id="KW-0378">Hydrolase</keyword>